<feature type="chain" id="PRO_1000121634" description="Large ribosomal subunit protein bL28">
    <location>
        <begin position="1"/>
        <end position="78"/>
    </location>
</feature>
<dbReference type="EMBL" id="CU468135">
    <property type="protein sequence ID" value="CAO95113.1"/>
    <property type="molecule type" value="Genomic_DNA"/>
</dbReference>
<dbReference type="RefSeq" id="WP_004154798.1">
    <property type="nucleotide sequence ID" value="NC_010694.1"/>
</dbReference>
<dbReference type="SMR" id="B2VF68"/>
<dbReference type="STRING" id="465817.ETA_00670"/>
<dbReference type="GeneID" id="97607674"/>
<dbReference type="KEGG" id="eta:ETA_00670"/>
<dbReference type="eggNOG" id="COG0227">
    <property type="taxonomic scope" value="Bacteria"/>
</dbReference>
<dbReference type="HOGENOM" id="CLU_064548_3_1_6"/>
<dbReference type="OrthoDB" id="9805609at2"/>
<dbReference type="Proteomes" id="UP000001726">
    <property type="component" value="Chromosome"/>
</dbReference>
<dbReference type="GO" id="GO:0022625">
    <property type="term" value="C:cytosolic large ribosomal subunit"/>
    <property type="evidence" value="ECO:0007669"/>
    <property type="project" value="TreeGrafter"/>
</dbReference>
<dbReference type="GO" id="GO:0003735">
    <property type="term" value="F:structural constituent of ribosome"/>
    <property type="evidence" value="ECO:0007669"/>
    <property type="project" value="InterPro"/>
</dbReference>
<dbReference type="GO" id="GO:0006412">
    <property type="term" value="P:translation"/>
    <property type="evidence" value="ECO:0007669"/>
    <property type="project" value="UniProtKB-UniRule"/>
</dbReference>
<dbReference type="FunFam" id="2.30.170.40:FF:000001">
    <property type="entry name" value="50S ribosomal protein L28"/>
    <property type="match status" value="1"/>
</dbReference>
<dbReference type="Gene3D" id="2.30.170.40">
    <property type="entry name" value="Ribosomal protein L28/L24"/>
    <property type="match status" value="1"/>
</dbReference>
<dbReference type="HAMAP" id="MF_00373">
    <property type="entry name" value="Ribosomal_bL28"/>
    <property type="match status" value="1"/>
</dbReference>
<dbReference type="InterPro" id="IPR026569">
    <property type="entry name" value="Ribosomal_bL28"/>
</dbReference>
<dbReference type="InterPro" id="IPR034704">
    <property type="entry name" value="Ribosomal_bL28/bL31-like_sf"/>
</dbReference>
<dbReference type="InterPro" id="IPR001383">
    <property type="entry name" value="Ribosomal_bL28_bact-type"/>
</dbReference>
<dbReference type="InterPro" id="IPR037147">
    <property type="entry name" value="Ribosomal_bL28_sf"/>
</dbReference>
<dbReference type="NCBIfam" id="TIGR00009">
    <property type="entry name" value="L28"/>
    <property type="match status" value="1"/>
</dbReference>
<dbReference type="PANTHER" id="PTHR13528">
    <property type="entry name" value="39S RIBOSOMAL PROTEIN L28, MITOCHONDRIAL"/>
    <property type="match status" value="1"/>
</dbReference>
<dbReference type="PANTHER" id="PTHR13528:SF2">
    <property type="entry name" value="LARGE RIBOSOMAL SUBUNIT PROTEIN BL28M"/>
    <property type="match status" value="1"/>
</dbReference>
<dbReference type="Pfam" id="PF00830">
    <property type="entry name" value="Ribosomal_L28"/>
    <property type="match status" value="1"/>
</dbReference>
<dbReference type="SUPFAM" id="SSF143800">
    <property type="entry name" value="L28p-like"/>
    <property type="match status" value="1"/>
</dbReference>
<proteinExistence type="inferred from homology"/>
<protein>
    <recommendedName>
        <fullName evidence="1">Large ribosomal subunit protein bL28</fullName>
    </recommendedName>
    <alternativeName>
        <fullName evidence="2">50S ribosomal protein L28</fullName>
    </alternativeName>
</protein>
<gene>
    <name evidence="1" type="primary">rpmB</name>
    <name type="ordered locus">ETA_00670</name>
</gene>
<reference key="1">
    <citation type="journal article" date="2008" name="Environ. Microbiol.">
        <title>The genome of Erwinia tasmaniensis strain Et1/99, a non-pathogenic bacterium in the genus Erwinia.</title>
        <authorList>
            <person name="Kube M."/>
            <person name="Migdoll A.M."/>
            <person name="Mueller I."/>
            <person name="Kuhl H."/>
            <person name="Beck A."/>
            <person name="Reinhardt R."/>
            <person name="Geider K."/>
        </authorList>
    </citation>
    <scope>NUCLEOTIDE SEQUENCE [LARGE SCALE GENOMIC DNA]</scope>
    <source>
        <strain>DSM 17950 / CFBP 7177 / CIP 109463 / NCPPB 4357 / Et1/99</strain>
    </source>
</reference>
<name>RL28_ERWT9</name>
<accession>B2VF68</accession>
<organism>
    <name type="scientific">Erwinia tasmaniensis (strain DSM 17950 / CFBP 7177 / CIP 109463 / NCPPB 4357 / Et1/99)</name>
    <dbReference type="NCBI Taxonomy" id="465817"/>
    <lineage>
        <taxon>Bacteria</taxon>
        <taxon>Pseudomonadati</taxon>
        <taxon>Pseudomonadota</taxon>
        <taxon>Gammaproteobacteria</taxon>
        <taxon>Enterobacterales</taxon>
        <taxon>Erwiniaceae</taxon>
        <taxon>Erwinia</taxon>
    </lineage>
</organism>
<keyword id="KW-1185">Reference proteome</keyword>
<keyword id="KW-0687">Ribonucleoprotein</keyword>
<keyword id="KW-0689">Ribosomal protein</keyword>
<evidence type="ECO:0000255" key="1">
    <source>
        <dbReference type="HAMAP-Rule" id="MF_00373"/>
    </source>
</evidence>
<evidence type="ECO:0000305" key="2"/>
<sequence>MSRVCQVTGKRPVTGNNRSHAMNATKRRFLPNLHSHRFWVESEKRFVTLRVSAKGMRVIDKKGIETVLADLRTRGEKY</sequence>
<comment type="similarity">
    <text evidence="1">Belongs to the bacterial ribosomal protein bL28 family.</text>
</comment>